<feature type="chain" id="PRO_0000349363" description="Myosin regulatory light chain 12B">
    <location>
        <begin position="1"/>
        <end position="171"/>
    </location>
</feature>
<feature type="domain" description="EF-hand 1" evidence="4">
    <location>
        <begin position="28"/>
        <end position="63"/>
    </location>
</feature>
<feature type="domain" description="EF-hand 2" evidence="4">
    <location>
        <begin position="97"/>
        <end position="132"/>
    </location>
</feature>
<feature type="domain" description="EF-hand 3" evidence="4">
    <location>
        <begin position="133"/>
        <end position="168"/>
    </location>
</feature>
<feature type="binding site" evidence="4">
    <location>
        <position position="41"/>
    </location>
    <ligand>
        <name>Ca(2+)</name>
        <dbReference type="ChEBI" id="CHEBI:29108"/>
    </ligand>
</feature>
<feature type="binding site" evidence="4">
    <location>
        <position position="43"/>
    </location>
    <ligand>
        <name>Ca(2+)</name>
        <dbReference type="ChEBI" id="CHEBI:29108"/>
    </ligand>
</feature>
<feature type="binding site" evidence="4">
    <location>
        <position position="45"/>
    </location>
    <ligand>
        <name>Ca(2+)</name>
        <dbReference type="ChEBI" id="CHEBI:29108"/>
    </ligand>
</feature>
<feature type="binding site" evidence="4">
    <location>
        <position position="52"/>
    </location>
    <ligand>
        <name>Ca(2+)</name>
        <dbReference type="ChEBI" id="CHEBI:29108"/>
    </ligand>
</feature>
<feature type="modified residue" description="Phosphothreonine; by MLCK and ZIPK/DAPK3" evidence="2">
    <location>
        <position position="18"/>
    </location>
</feature>
<feature type="modified residue" description="Phosphoserine; by MLCK and ZIPK/DAPK3" evidence="2">
    <location>
        <position position="19"/>
    </location>
</feature>
<dbReference type="EMBL" id="BC134471">
    <property type="protein sequence ID" value="AAI34472.1"/>
    <property type="molecule type" value="mRNA"/>
</dbReference>
<dbReference type="EMBL" id="BC142028">
    <property type="protein sequence ID" value="AAI42029.1"/>
    <property type="molecule type" value="mRNA"/>
</dbReference>
<dbReference type="RefSeq" id="NP_001077233.1">
    <property type="nucleotide sequence ID" value="NM_001083764.2"/>
</dbReference>
<dbReference type="SMR" id="A4IF97"/>
<dbReference type="FunCoup" id="A4IF97">
    <property type="interactions" value="940"/>
</dbReference>
<dbReference type="STRING" id="9913.ENSBTAP00000037091"/>
<dbReference type="PaxDb" id="9913-ENSBTAP00000037091"/>
<dbReference type="PeptideAtlas" id="A4IF97"/>
<dbReference type="Ensembl" id="ENSBTAT00000037254.5">
    <property type="protein sequence ID" value="ENSBTAP00000037091.3"/>
    <property type="gene ID" value="ENSBTAG00000026266.5"/>
</dbReference>
<dbReference type="GeneID" id="614055"/>
<dbReference type="KEGG" id="bta:614055"/>
<dbReference type="CTD" id="103910"/>
<dbReference type="VEuPathDB" id="HostDB:ENSBTAG00000026266"/>
<dbReference type="eggNOG" id="KOG0031">
    <property type="taxonomic scope" value="Eukaryota"/>
</dbReference>
<dbReference type="GeneTree" id="ENSGT00940000153607"/>
<dbReference type="HOGENOM" id="CLU_061288_9_3_1"/>
<dbReference type="InParanoid" id="A4IF97"/>
<dbReference type="OMA" id="AHGPINF"/>
<dbReference type="OrthoDB" id="9703420at2759"/>
<dbReference type="TreeFam" id="TF314218"/>
<dbReference type="Reactome" id="R-BTA-445355">
    <property type="pathway name" value="Smooth Muscle Contraction"/>
</dbReference>
<dbReference type="Reactome" id="R-BTA-5627123">
    <property type="pathway name" value="RHO GTPases activate PAKs"/>
</dbReference>
<dbReference type="Proteomes" id="UP000009136">
    <property type="component" value="Chromosome 24"/>
</dbReference>
<dbReference type="Bgee" id="ENSBTAG00000026266">
    <property type="expression patterns" value="Expressed in abomasum and 103 other cell types or tissues"/>
</dbReference>
<dbReference type="GO" id="GO:0045177">
    <property type="term" value="C:apical part of cell"/>
    <property type="evidence" value="ECO:0007669"/>
    <property type="project" value="Ensembl"/>
</dbReference>
<dbReference type="GO" id="GO:0005903">
    <property type="term" value="C:brush border"/>
    <property type="evidence" value="ECO:0007669"/>
    <property type="project" value="Ensembl"/>
</dbReference>
<dbReference type="GO" id="GO:0005938">
    <property type="term" value="C:cell cortex"/>
    <property type="evidence" value="ECO:0000250"/>
    <property type="project" value="UniProtKB"/>
</dbReference>
<dbReference type="GO" id="GO:0005737">
    <property type="term" value="C:cytoplasm"/>
    <property type="evidence" value="ECO:0000318"/>
    <property type="project" value="GO_Central"/>
</dbReference>
<dbReference type="GO" id="GO:0030016">
    <property type="term" value="C:myofibril"/>
    <property type="evidence" value="ECO:0000318"/>
    <property type="project" value="GO_Central"/>
</dbReference>
<dbReference type="GO" id="GO:0016460">
    <property type="term" value="C:myosin II complex"/>
    <property type="evidence" value="ECO:0000318"/>
    <property type="project" value="GO_Central"/>
</dbReference>
<dbReference type="GO" id="GO:0001725">
    <property type="term" value="C:stress fiber"/>
    <property type="evidence" value="ECO:0000318"/>
    <property type="project" value="GO_Central"/>
</dbReference>
<dbReference type="GO" id="GO:0030018">
    <property type="term" value="C:Z disc"/>
    <property type="evidence" value="ECO:0007669"/>
    <property type="project" value="Ensembl"/>
</dbReference>
<dbReference type="GO" id="GO:0005509">
    <property type="term" value="F:calcium ion binding"/>
    <property type="evidence" value="ECO:0007669"/>
    <property type="project" value="InterPro"/>
</dbReference>
<dbReference type="GO" id="GO:0032036">
    <property type="term" value="F:myosin heavy chain binding"/>
    <property type="evidence" value="ECO:0000318"/>
    <property type="project" value="GO_Central"/>
</dbReference>
<dbReference type="GO" id="GO:0008360">
    <property type="term" value="P:regulation of cell shape"/>
    <property type="evidence" value="ECO:0007669"/>
    <property type="project" value="Ensembl"/>
</dbReference>
<dbReference type="CDD" id="cd00051">
    <property type="entry name" value="EFh"/>
    <property type="match status" value="1"/>
</dbReference>
<dbReference type="FunFam" id="1.10.238.10:FF:000010">
    <property type="entry name" value="Myosin regulatory light chain 2, atrial isoform"/>
    <property type="match status" value="1"/>
</dbReference>
<dbReference type="FunFam" id="1.10.238.10:FF:000007">
    <property type="entry name" value="Putative myosin regulatory light chain sqh"/>
    <property type="match status" value="1"/>
</dbReference>
<dbReference type="Gene3D" id="1.10.238.10">
    <property type="entry name" value="EF-hand"/>
    <property type="match status" value="2"/>
</dbReference>
<dbReference type="InterPro" id="IPR011992">
    <property type="entry name" value="EF-hand-dom_pair"/>
</dbReference>
<dbReference type="InterPro" id="IPR018247">
    <property type="entry name" value="EF_Hand_1_Ca_BS"/>
</dbReference>
<dbReference type="InterPro" id="IPR015070">
    <property type="entry name" value="EF_hand_DJBP"/>
</dbReference>
<dbReference type="InterPro" id="IPR002048">
    <property type="entry name" value="EF_hand_dom"/>
</dbReference>
<dbReference type="InterPro" id="IPR050403">
    <property type="entry name" value="Myosin_RLC"/>
</dbReference>
<dbReference type="PANTHER" id="PTHR23049">
    <property type="entry name" value="MYOSIN REGULATORY LIGHT CHAIN 2"/>
    <property type="match status" value="1"/>
</dbReference>
<dbReference type="Pfam" id="PF08976">
    <property type="entry name" value="EF-hand_11"/>
    <property type="match status" value="1"/>
</dbReference>
<dbReference type="Pfam" id="PF13499">
    <property type="entry name" value="EF-hand_7"/>
    <property type="match status" value="1"/>
</dbReference>
<dbReference type="SMART" id="SM00054">
    <property type="entry name" value="EFh"/>
    <property type="match status" value="2"/>
</dbReference>
<dbReference type="SUPFAM" id="SSF47473">
    <property type="entry name" value="EF-hand"/>
    <property type="match status" value="1"/>
</dbReference>
<dbReference type="PROSITE" id="PS00018">
    <property type="entry name" value="EF_HAND_1"/>
    <property type="match status" value="1"/>
</dbReference>
<dbReference type="PROSITE" id="PS50222">
    <property type="entry name" value="EF_HAND_2"/>
    <property type="match status" value="3"/>
</dbReference>
<keyword id="KW-0106">Calcium</keyword>
<keyword id="KW-0479">Metal-binding</keyword>
<keyword id="KW-0505">Motor protein</keyword>
<keyword id="KW-0514">Muscle protein</keyword>
<keyword id="KW-0518">Myosin</keyword>
<keyword id="KW-0597">Phosphoprotein</keyword>
<keyword id="KW-1185">Reference proteome</keyword>
<keyword id="KW-0677">Repeat</keyword>
<organism>
    <name type="scientific">Bos taurus</name>
    <name type="common">Bovine</name>
    <dbReference type="NCBI Taxonomy" id="9913"/>
    <lineage>
        <taxon>Eukaryota</taxon>
        <taxon>Metazoa</taxon>
        <taxon>Chordata</taxon>
        <taxon>Craniata</taxon>
        <taxon>Vertebrata</taxon>
        <taxon>Euteleostomi</taxon>
        <taxon>Mammalia</taxon>
        <taxon>Eutheria</taxon>
        <taxon>Laurasiatheria</taxon>
        <taxon>Artiodactyla</taxon>
        <taxon>Ruminantia</taxon>
        <taxon>Pecora</taxon>
        <taxon>Bovidae</taxon>
        <taxon>Bovinae</taxon>
        <taxon>Bos</taxon>
    </lineage>
</organism>
<sequence length="171" mass="19692">MSSKKAKTKTKKRPQRATSNVFAMFDQSQIQEFKEAFNMIDQNRDGFIDKEDLHDMLASLGKNPTDAYLEAMMNEAPGPINFTMFLTMFGEKLNGTDPEDVIRNAFACFDEEATGTIQEDYLRELLTTMGDRFTDEEVDELYREAPIDKKGNFNYIEFTRILKHGAKDKDD</sequence>
<evidence type="ECO:0000250" key="1"/>
<evidence type="ECO:0000250" key="2">
    <source>
        <dbReference type="UniProtKB" id="O14950"/>
    </source>
</evidence>
<evidence type="ECO:0000250" key="3">
    <source>
        <dbReference type="UniProtKB" id="Q3THE2"/>
    </source>
</evidence>
<evidence type="ECO:0000255" key="4">
    <source>
        <dbReference type="PROSITE-ProRule" id="PRU00448"/>
    </source>
</evidence>
<gene>
    <name type="primary">MYL12B</name>
    <name type="synonym">MRLC2</name>
    <name type="synonym">MYLC2B</name>
</gene>
<proteinExistence type="evidence at transcript level"/>
<comment type="function">
    <text evidence="2">Myosin regulatory subunit that plays an important role in regulation of both smooth muscle and nonmuscle cell contractile activity via its phosphorylation. Phosphorylation triggers actin polymerization in vascular smooth muscle. Implicated in cytokinesis, receptor capping, and cell locomotion.</text>
</comment>
<comment type="subunit">
    <text evidence="3">Myosin is a hexamer of 2 heavy chains and 4 light chains: interacts with myosin heavy chain MYO19.</text>
</comment>
<comment type="PTM">
    <text evidence="2">Phosphorylation increases the actin-activated myosin ATPase activity and thereby regulates the contractile activity. It is required to generate the driving force in the migration of the cells but not necessary for localization of myosin-2 at the leading edge. Phosphorylation is reduced following epigallocatechin-3-O-gallate treatment.</text>
</comment>
<comment type="miscellaneous">
    <text evidence="1">This chain binds calcium.</text>
</comment>
<name>ML12B_BOVIN</name>
<protein>
    <recommendedName>
        <fullName>Myosin regulatory light chain 12B</fullName>
    </recommendedName>
    <alternativeName>
        <fullName>Myosin regulatory light chain 2-B, smooth muscle isoform</fullName>
    </alternativeName>
    <alternativeName>
        <fullName>Myosin regulatory light chain 20 kDa</fullName>
        <shortName>MLC20</shortName>
    </alternativeName>
    <alternativeName>
        <fullName>Myosin regulatory light chain MRLC2</fullName>
    </alternativeName>
</protein>
<reference key="1">
    <citation type="submission" date="2007-03" db="EMBL/GenBank/DDBJ databases">
        <authorList>
            <consortium name="NIH - Mammalian Gene Collection (MGC) project"/>
        </authorList>
    </citation>
    <scope>NUCLEOTIDE SEQUENCE [LARGE SCALE MRNA]</scope>
    <source>
        <strain>Hereford</strain>
        <tissue>Fetal pons</tissue>
        <tissue>Thymus</tissue>
    </source>
</reference>
<accession>A4IF97</accession>